<organism>
    <name type="scientific">Bos taurus</name>
    <name type="common">Bovine</name>
    <dbReference type="NCBI Taxonomy" id="9913"/>
    <lineage>
        <taxon>Eukaryota</taxon>
        <taxon>Metazoa</taxon>
        <taxon>Chordata</taxon>
        <taxon>Craniata</taxon>
        <taxon>Vertebrata</taxon>
        <taxon>Euteleostomi</taxon>
        <taxon>Mammalia</taxon>
        <taxon>Eutheria</taxon>
        <taxon>Laurasiatheria</taxon>
        <taxon>Artiodactyla</taxon>
        <taxon>Ruminantia</taxon>
        <taxon>Pecora</taxon>
        <taxon>Bovidae</taxon>
        <taxon>Bovinae</taxon>
        <taxon>Bos</taxon>
    </lineage>
</organism>
<keyword id="KW-0007">Acetylation</keyword>
<keyword id="KW-0067">ATP-binding</keyword>
<keyword id="KW-1003">Cell membrane</keyword>
<keyword id="KW-0143">Chaperone</keyword>
<keyword id="KW-0963">Cytoplasm</keyword>
<keyword id="KW-0325">Glycoprotein</keyword>
<keyword id="KW-0472">Membrane</keyword>
<keyword id="KW-0488">Methylation</keyword>
<keyword id="KW-0547">Nucleotide-binding</keyword>
<keyword id="KW-0539">Nucleus</keyword>
<keyword id="KW-0597">Phosphoprotein</keyword>
<keyword id="KW-1185">Reference proteome</keyword>
<keyword id="KW-0702">S-nitrosylation</keyword>
<keyword id="KW-0964">Secreted</keyword>
<keyword id="KW-0346">Stress response</keyword>
<keyword id="KW-0832">Ubl conjugation</keyword>
<dbReference type="EMBL" id="AB072369">
    <property type="protein sequence ID" value="BAC82488.1"/>
    <property type="molecule type" value="mRNA"/>
</dbReference>
<dbReference type="EMBL" id="BT025368">
    <property type="protein sequence ID" value="ABF57324.1"/>
    <property type="molecule type" value="mRNA"/>
</dbReference>
<dbReference type="RefSeq" id="NP_001073105.1">
    <property type="nucleotide sequence ID" value="NM_001079637.1"/>
</dbReference>
<dbReference type="SMR" id="Q76LV1"/>
<dbReference type="BioGRID" id="613028">
    <property type="interactions" value="4"/>
</dbReference>
<dbReference type="FunCoup" id="Q76LV1">
    <property type="interactions" value="3649"/>
</dbReference>
<dbReference type="IntAct" id="Q76LV1">
    <property type="interactions" value="1"/>
</dbReference>
<dbReference type="STRING" id="9913.ENSBTAP00000072629"/>
<dbReference type="GlyCosmos" id="Q76LV1">
    <property type="glycosylation" value="2 sites, No reported glycans"/>
</dbReference>
<dbReference type="GlyGen" id="Q76LV1">
    <property type="glycosylation" value="2 sites"/>
</dbReference>
<dbReference type="PaxDb" id="9913-ENSBTAP00000001034"/>
<dbReference type="PeptideAtlas" id="Q76LV1"/>
<dbReference type="Ensembl" id="ENSBTAT00000081693.2">
    <property type="protein sequence ID" value="ENSBTAP00000072629.1"/>
    <property type="gene ID" value="ENSBTAG00000000778.6"/>
</dbReference>
<dbReference type="GeneID" id="767874"/>
<dbReference type="KEGG" id="bta:767874"/>
<dbReference type="CTD" id="3326"/>
<dbReference type="VEuPathDB" id="HostDB:ENSBTAG00000000778"/>
<dbReference type="VGNC" id="VGNC:55918">
    <property type="gene designation" value="HSP90AB1"/>
</dbReference>
<dbReference type="eggNOG" id="KOG0019">
    <property type="taxonomic scope" value="Eukaryota"/>
</dbReference>
<dbReference type="GeneTree" id="ENSGT01020000230401"/>
<dbReference type="InParanoid" id="Q76LV1"/>
<dbReference type="OMA" id="TRMKAEQ"/>
<dbReference type="OrthoDB" id="5426351at2759"/>
<dbReference type="Reactome" id="R-BTA-168928">
    <property type="pathway name" value="DDX58/IFIH1-mediated induction of interferon-alpha/beta"/>
</dbReference>
<dbReference type="Reactome" id="R-BTA-2029482">
    <property type="pathway name" value="Regulation of actin dynamics for phagocytic cup formation"/>
</dbReference>
<dbReference type="Reactome" id="R-BTA-3371497">
    <property type="pathway name" value="HSP90 chaperone cycle for steroid hormone receptors (SHR) in the presence of ligand"/>
</dbReference>
<dbReference type="Reactome" id="R-BTA-3371511">
    <property type="pathway name" value="HSF1 activation"/>
</dbReference>
<dbReference type="Reactome" id="R-BTA-3371568">
    <property type="pathway name" value="Attenuation phase"/>
</dbReference>
<dbReference type="Reactome" id="R-BTA-3371571">
    <property type="pathway name" value="HSF1-dependent transactivation"/>
</dbReference>
<dbReference type="Reactome" id="R-BTA-399954">
    <property type="pathway name" value="Sema3A PAK dependent Axon repulsion"/>
</dbReference>
<dbReference type="Reactome" id="R-BTA-6798695">
    <property type="pathway name" value="Neutrophil degranulation"/>
</dbReference>
<dbReference type="Reactome" id="R-BTA-844456">
    <property type="pathway name" value="The NLRP3 inflammasome"/>
</dbReference>
<dbReference type="Reactome" id="R-BTA-8937144">
    <property type="pathway name" value="Aryl hydrocarbon receptor signalling"/>
</dbReference>
<dbReference type="Reactome" id="R-BTA-8939211">
    <property type="pathway name" value="ESR-mediated signaling"/>
</dbReference>
<dbReference type="Reactome" id="R-BTA-9013418">
    <property type="pathway name" value="RHOBTB2 GTPase cycle"/>
</dbReference>
<dbReference type="Reactome" id="R-BTA-9018519">
    <property type="pathway name" value="Estrogen-dependent gene expression"/>
</dbReference>
<dbReference type="PRO" id="PR:Q76LV1"/>
<dbReference type="Proteomes" id="UP000009136">
    <property type="component" value="Chromosome 23"/>
</dbReference>
<dbReference type="Bgee" id="ENSBTAG00000000778">
    <property type="expression patterns" value="Expressed in granulosa cell and 102 other cell types or tissues"/>
</dbReference>
<dbReference type="GO" id="GO:0034751">
    <property type="term" value="C:aryl hydrocarbon receptor complex"/>
    <property type="evidence" value="ECO:0000250"/>
    <property type="project" value="UniProtKB"/>
</dbReference>
<dbReference type="GO" id="GO:0005737">
    <property type="term" value="C:cytoplasm"/>
    <property type="evidence" value="ECO:0000250"/>
    <property type="project" value="UniProtKB"/>
</dbReference>
<dbReference type="GO" id="GO:0005829">
    <property type="term" value="C:cytosol"/>
    <property type="evidence" value="ECO:0000318"/>
    <property type="project" value="GO_Central"/>
</dbReference>
<dbReference type="GO" id="GO:0120293">
    <property type="term" value="C:dynein axonemal particle"/>
    <property type="evidence" value="ECO:0000250"/>
    <property type="project" value="UniProtKB"/>
</dbReference>
<dbReference type="GO" id="GO:0005576">
    <property type="term" value="C:extracellular region"/>
    <property type="evidence" value="ECO:0000250"/>
    <property type="project" value="UniProtKB"/>
</dbReference>
<dbReference type="GO" id="GO:0042470">
    <property type="term" value="C:melanosome"/>
    <property type="evidence" value="ECO:0007669"/>
    <property type="project" value="UniProtKB-SubCell"/>
</dbReference>
<dbReference type="GO" id="GO:0005739">
    <property type="term" value="C:mitochondrion"/>
    <property type="evidence" value="ECO:0000250"/>
    <property type="project" value="AgBase"/>
</dbReference>
<dbReference type="GO" id="GO:0005634">
    <property type="term" value="C:nucleus"/>
    <property type="evidence" value="ECO:0000250"/>
    <property type="project" value="UniProtKB"/>
</dbReference>
<dbReference type="GO" id="GO:0048471">
    <property type="term" value="C:perinuclear region of cytoplasm"/>
    <property type="evidence" value="ECO:0000318"/>
    <property type="project" value="GO_Central"/>
</dbReference>
<dbReference type="GO" id="GO:0005886">
    <property type="term" value="C:plasma membrane"/>
    <property type="evidence" value="ECO:0000318"/>
    <property type="project" value="GO_Central"/>
</dbReference>
<dbReference type="GO" id="GO:0032991">
    <property type="term" value="C:protein-containing complex"/>
    <property type="evidence" value="ECO:0000318"/>
    <property type="project" value="GO_Central"/>
</dbReference>
<dbReference type="GO" id="GO:0005524">
    <property type="term" value="F:ATP binding"/>
    <property type="evidence" value="ECO:0000318"/>
    <property type="project" value="GO_Central"/>
</dbReference>
<dbReference type="GO" id="GO:0016887">
    <property type="term" value="F:ATP hydrolysis activity"/>
    <property type="evidence" value="ECO:0000318"/>
    <property type="project" value="GO_Central"/>
</dbReference>
<dbReference type="GO" id="GO:0140662">
    <property type="term" value="F:ATP-dependent protein folding chaperone"/>
    <property type="evidence" value="ECO:0007669"/>
    <property type="project" value="InterPro"/>
</dbReference>
<dbReference type="GO" id="GO:0046983">
    <property type="term" value="F:protein dimerization activity"/>
    <property type="evidence" value="ECO:0000250"/>
    <property type="project" value="UniProtKB"/>
</dbReference>
<dbReference type="GO" id="GO:0141069">
    <property type="term" value="F:receptor ligand inhibitor activity"/>
    <property type="evidence" value="ECO:0000250"/>
    <property type="project" value="UniProtKB"/>
</dbReference>
<dbReference type="GO" id="GO:0051082">
    <property type="term" value="F:unfolded protein binding"/>
    <property type="evidence" value="ECO:0000318"/>
    <property type="project" value="GO_Central"/>
</dbReference>
<dbReference type="GO" id="GO:0034605">
    <property type="term" value="P:cellular response to heat"/>
    <property type="evidence" value="ECO:0000318"/>
    <property type="project" value="GO_Central"/>
</dbReference>
<dbReference type="GO" id="GO:0032435">
    <property type="term" value="P:negative regulation of proteasomal ubiquitin-dependent protein catabolic process"/>
    <property type="evidence" value="ECO:0000250"/>
    <property type="project" value="UniProtKB"/>
</dbReference>
<dbReference type="GO" id="GO:0030511">
    <property type="term" value="P:positive regulation of transforming growth factor beta receptor signaling pathway"/>
    <property type="evidence" value="ECO:0000250"/>
    <property type="project" value="UniProtKB"/>
</dbReference>
<dbReference type="GO" id="GO:0006457">
    <property type="term" value="P:protein folding"/>
    <property type="evidence" value="ECO:0000318"/>
    <property type="project" value="GO_Central"/>
</dbReference>
<dbReference type="GO" id="GO:0050821">
    <property type="term" value="P:protein stabilization"/>
    <property type="evidence" value="ECO:0000318"/>
    <property type="project" value="GO_Central"/>
</dbReference>
<dbReference type="GO" id="GO:0051726">
    <property type="term" value="P:regulation of cell cycle"/>
    <property type="evidence" value="ECO:0000250"/>
    <property type="project" value="UniProtKB"/>
</dbReference>
<dbReference type="CDD" id="cd16927">
    <property type="entry name" value="HATPase_Hsp90-like"/>
    <property type="match status" value="1"/>
</dbReference>
<dbReference type="FunFam" id="1.20.120.790:FF:000001">
    <property type="entry name" value="Heat shock protein 90 alpha"/>
    <property type="match status" value="1"/>
</dbReference>
<dbReference type="FunFam" id="3.30.230.80:FF:000001">
    <property type="entry name" value="Heat shock protein 90 alpha"/>
    <property type="match status" value="1"/>
</dbReference>
<dbReference type="FunFam" id="3.40.50.11260:FF:000001">
    <property type="entry name" value="Heat shock protein 90 alpha"/>
    <property type="match status" value="1"/>
</dbReference>
<dbReference type="FunFam" id="3.30.565.10:FF:000204">
    <property type="entry name" value="Heat shock protein HSP 90-beta"/>
    <property type="match status" value="1"/>
</dbReference>
<dbReference type="Gene3D" id="3.30.230.80">
    <property type="match status" value="1"/>
</dbReference>
<dbReference type="Gene3D" id="3.40.50.11260">
    <property type="match status" value="1"/>
</dbReference>
<dbReference type="Gene3D" id="1.20.120.790">
    <property type="entry name" value="Heat shock protein 90, C-terminal domain"/>
    <property type="match status" value="1"/>
</dbReference>
<dbReference type="Gene3D" id="3.30.565.10">
    <property type="entry name" value="Histidine kinase-like ATPase, C-terminal domain"/>
    <property type="match status" value="1"/>
</dbReference>
<dbReference type="HAMAP" id="MF_00505">
    <property type="entry name" value="HSP90"/>
    <property type="match status" value="1"/>
</dbReference>
<dbReference type="InterPro" id="IPR036890">
    <property type="entry name" value="HATPase_C_sf"/>
</dbReference>
<dbReference type="InterPro" id="IPR019805">
    <property type="entry name" value="Heat_shock_protein_90_CS"/>
</dbReference>
<dbReference type="InterPro" id="IPR037196">
    <property type="entry name" value="HSP90_C"/>
</dbReference>
<dbReference type="InterPro" id="IPR001404">
    <property type="entry name" value="Hsp90_fam"/>
</dbReference>
<dbReference type="InterPro" id="IPR020575">
    <property type="entry name" value="Hsp90_N"/>
</dbReference>
<dbReference type="InterPro" id="IPR020568">
    <property type="entry name" value="Ribosomal_Su5_D2-typ_SF"/>
</dbReference>
<dbReference type="NCBIfam" id="NF003555">
    <property type="entry name" value="PRK05218.1"/>
    <property type="match status" value="1"/>
</dbReference>
<dbReference type="PANTHER" id="PTHR11528">
    <property type="entry name" value="HEAT SHOCK PROTEIN 90 FAMILY MEMBER"/>
    <property type="match status" value="1"/>
</dbReference>
<dbReference type="Pfam" id="PF13589">
    <property type="entry name" value="HATPase_c_3"/>
    <property type="match status" value="1"/>
</dbReference>
<dbReference type="Pfam" id="PF00183">
    <property type="entry name" value="HSP90"/>
    <property type="match status" value="1"/>
</dbReference>
<dbReference type="PIRSF" id="PIRSF002583">
    <property type="entry name" value="Hsp90"/>
    <property type="match status" value="1"/>
</dbReference>
<dbReference type="PRINTS" id="PR00775">
    <property type="entry name" value="HEATSHOCK90"/>
</dbReference>
<dbReference type="SMART" id="SM00387">
    <property type="entry name" value="HATPase_c"/>
    <property type="match status" value="1"/>
</dbReference>
<dbReference type="SUPFAM" id="SSF55874">
    <property type="entry name" value="ATPase domain of HSP90 chaperone/DNA topoisomerase II/histidine kinase"/>
    <property type="match status" value="1"/>
</dbReference>
<dbReference type="SUPFAM" id="SSF110942">
    <property type="entry name" value="HSP90 C-terminal domain"/>
    <property type="match status" value="1"/>
</dbReference>
<dbReference type="SUPFAM" id="SSF54211">
    <property type="entry name" value="Ribosomal protein S5 domain 2-like"/>
    <property type="match status" value="1"/>
</dbReference>
<dbReference type="PROSITE" id="PS00298">
    <property type="entry name" value="HSP90"/>
    <property type="match status" value="1"/>
</dbReference>
<proteinExistence type="evidence at transcript level"/>
<protein>
    <recommendedName>
        <fullName>Heat shock protein HSP 90-beta</fullName>
    </recommendedName>
</protein>
<reference key="1">
    <citation type="submission" date="2001-09" db="EMBL/GenBank/DDBJ databases">
        <title>cDNA sequences of two isoforms of bovine heat-shock protein 90.</title>
        <authorList>
            <person name="Watanabe A."/>
            <person name="Uchida I."/>
            <person name="Fujimoto Y."/>
            <person name="Nakata K."/>
            <person name="Oikawa S."/>
        </authorList>
    </citation>
    <scope>NUCLEOTIDE SEQUENCE [MRNA]</scope>
    <source>
        <tissue>Mammary gland</tissue>
    </source>
</reference>
<reference key="2">
    <citation type="journal article" date="2005" name="BMC Genomics">
        <title>Characterization of 954 bovine full-CDS cDNA sequences.</title>
        <authorList>
            <person name="Harhay G.P."/>
            <person name="Sonstegard T.S."/>
            <person name="Keele J.W."/>
            <person name="Heaton M.P."/>
            <person name="Clawson M.L."/>
            <person name="Snelling W.M."/>
            <person name="Wiedmann R.T."/>
            <person name="Van Tassell C.P."/>
            <person name="Smith T.P.L."/>
        </authorList>
    </citation>
    <scope>NUCLEOTIDE SEQUENCE [LARGE SCALE MRNA]</scope>
</reference>
<evidence type="ECO:0000250" key="1"/>
<evidence type="ECO:0000250" key="2">
    <source>
        <dbReference type="UniProtKB" id="P07900"/>
    </source>
</evidence>
<evidence type="ECO:0000250" key="3">
    <source>
        <dbReference type="UniProtKB" id="P08238"/>
    </source>
</evidence>
<evidence type="ECO:0000250" key="4">
    <source>
        <dbReference type="UniProtKB" id="P11499"/>
    </source>
</evidence>
<evidence type="ECO:0000250" key="5">
    <source>
        <dbReference type="UniProtKB" id="P34058"/>
    </source>
</evidence>
<evidence type="ECO:0000250" key="6">
    <source>
        <dbReference type="UniProtKB" id="Q6AZV1"/>
    </source>
</evidence>
<evidence type="ECO:0000256" key="7">
    <source>
        <dbReference type="SAM" id="MobiDB-lite"/>
    </source>
</evidence>
<evidence type="ECO:0000305" key="8"/>
<sequence>MPEEVHHGEEEVETFAFQAEIAQLMSLIINTFYSNKEIFLRELISNASDALDKIRYESLTDPSKLDSGKELKIDIIPNPQERTLTLVDTGIGMTKADLVNNLGTIAKSGTKAFMEALQAGADISMIGQFGVGFYSAYLVAEKVVVITKHNDDEQYAWESSAGGSFTVRADHGEPIGRGTKVILHLKEDQTEYLEERRVKEVVKKHSQFIGYPITLYLEKEREKEISDDEAEEEKGEKEEEDKDDEEKPKIEDVGSDEEDDSGKDKKKKTKKIKEKYIDQEELNKTKPIWTRNPDDITQEEYGEFYKSLTNDWEDHLAVKHFSVEGQLEFRALLFIPRRAPFDLFENKKKKNNIKLYVRRVFIMDSCDELIPEYLNFIRGVVDSEDLPLNISREMLQQSKILKVIRKNIVKKCLELFSELAEDKENYKKFYEAFSKNLKLGIHEDSTNRRRLSELLRYHTSQSGDEMTSLSEYVSRMKETQKSIYYITGESKEQVANSAFVERVRKRGFEVVYMTEPIDEYCVQQLKEFDGKSLVSVTKEGLELPEDEEEKKKMEESKAKFENLCKLMKEILDKKVEKVTISNRLVSSPCCIVTSTYGWTANMERIMKAQALRDNSTMGYMMAKKHLEINPDHPIVETLRQKAEADKNDKAVKDLVVLLFETALLSSGFSLEDPQTHSNRIYRMIKLGLGIDEDEVTAEEPSAAVPDEIPPLEGDEDASRMEEVD</sequence>
<accession>Q76LV1</accession>
<name>HS90B_BOVIN</name>
<comment type="function">
    <text evidence="3">Molecular chaperone that promotes the maturation, structural maintenance and proper regulation of specific target proteins involved for instance in cell cycle control and signal transduction. Undergoes a functional cycle linked to its ATPase activity. This cycle probably induces conformational changes in the client proteins, thereby causing their activation. Interacts dynamically with various co-chaperones that modulate its substrate recognition, ATPase cycle and chaperone function. Engages with a range of client protein classes via its interaction with various co-chaperone proteins or complexes, that act as adapters, simultaneously able to interact with the specific client and the central chaperone itself. Recruitment of ATP and co-chaperone followed by client protein forms a functional chaperone. After the completion of the chaperoning process, properly folded client protein and co-chaperone leave HSP90 in an ADP-bound partially open conformation and finally, ADP is released from HSP90 which acquires an open conformation for the next cycle. Apart from its chaperone activity, it also plays a role in the regulation of the transcription machinery. HSP90 and its co-chaperones modulate transcription at least at three different levels. They first alter the steady-state levels of certain transcription factors in response to various physiological cues. Second, they modulate the activity of certain epigenetic modifiers, such as histone deacetylases or DNA methyl transferases, and thereby respond to the change in the environment. Third, they participate in the eviction of histones from the promoter region of certain genes and thereby turn on gene expression. Antagonizes STUB1-mediated inhibition of TGF-beta signaling via inhibition of STUB1-mediated SMAD3 ubiquitination and degradation. Promotes cell differentiation by chaperoning BIRC2 and thereby protecting from auto-ubiquitination and degradation by the proteasomal machinery. Main chaperone involved in the phosphorylation/activation of the STAT1 by chaperoning both JAK2 and PRKCE under heat shock and in turn, activates its own transcription. Involved in the translocation into ERGIC (endoplasmic reticulum-Golgi intermediate compartment) of leaderless cargos (lacking the secretion signal sequence) such as the interleukin 1/IL-1; the translocation process is mediated by the cargo receptor TMED10.</text>
</comment>
<comment type="activity regulation">
    <text evidence="3">In the resting state, through the dimerization of its C-terminal domain, HSP90 forms a homodimer which is defined as the open conformation. Upon ATP-binding, the N-terminal domain undergoes significant conformational changes and comes in contact to form an active closed conformation. After HSP90 finishes its chaperoning tasks of assisting the proper folding, stabilization and activation of client proteins under the active state, ATP molecule is hydrolyzed to ADP which then dissociates from HSP90 and directs the protein back to the resting state.</text>
</comment>
<comment type="subunit">
    <text evidence="3 4 5">Monomer. Homodimer (By similarity). Forms a complex with CDK6 and CDC37. Interacts with UNC45A; binding to UNC45A involves 2 UNC45A monomers per HSP90AB1 dimer (By similarity). Interacts with CHORDC1 (By similarity). Interacts with DNAJC7. Interacts with FKBP4. May interact with NWD1. Interacts with SGTA. Interacts with HSF1 in an ATP-dependent manner. Interacts with MET; the interaction suppresses MET kinase activity. Interacts with ERBB2 in an ATP-dependent manner; the interaction suppresses ERBB2 kinase activity. Interacts with HIF1A, KEAP1 and RHOBTB2. Interacts with STUB1 and SMAD3. Interacts with XPO1 and AHSA1. Interacts with BIRC2. Interacts with KCNQ4; promotes cell surface expression of KCNQ4. Interacts with BIRC2; prevents auto-ubiquitination and degradation of its client protein BIRC2. Interacts with NOS3. Interacts with AHR; interaction is inhibited by HSP90AB1 phosphorylation on Ser-226 and Ser-255. Interacts with STIP1 and CDC37; upon SMYD2-dependent methylation. Interacts with JAK2 and PRKCE; promotes functional activation in a heat shock-dependent manner. Interacts with HSP90AA1; interaction is constitutive. HSP90AB1-CDC37 chaperone complex interacts with inactive MAPK7 (via N-terminal half) in resting cells; the interaction is MAP2K5-independent and prevents from ubiquitination and proteasomal degradation. Interacts with CDC25A; prevents heat shock-mediated CDC25A degradation and contributes to cell cycle progression. Interacts with TP53 (via DNA binding domain); suppresses TP53 aggregation and prevents from irreversible thermal inactivation. Interacts with TGFB1 processed form (LAP); inhibits latent TGFB1 activation (By similarity). Interacts with TRIM8; prevents nucleus translocation of phosphorylated STAT3 and HSP90AB1 (By similarity). Interacts with NR3C1 (via domain NR LBD) and NR1D1 (via domain NR LBD) (By similarity). Interacts with PDCL3 (By similarity). Interacts with TTC4 (via TPR repeats) (By similarity). Interacts with IL1B; the interaction facilitates cargo translocation into the ERGIC (By similarity).</text>
</comment>
<comment type="subcellular location">
    <subcellularLocation>
        <location evidence="3">Cytoplasm</location>
    </subcellularLocation>
    <subcellularLocation>
        <location evidence="3">Melanosome</location>
    </subcellularLocation>
    <subcellularLocation>
        <location evidence="3">Nucleus</location>
    </subcellularLocation>
    <subcellularLocation>
        <location evidence="3">Secreted</location>
    </subcellularLocation>
    <subcellularLocation>
        <location evidence="3">Cell membrane</location>
    </subcellularLocation>
    <subcellularLocation>
        <location evidence="6">Dynein axonemal particle</location>
    </subcellularLocation>
    <text evidence="3">Translocates with BIRC2 from the nucleus to the cytoplasm during differentiation. Secreted when associated with TGFB1 processed form (LAP).</text>
</comment>
<comment type="domain">
    <text evidence="2">The TPR repeat-binding motif mediates interaction with TPR repeat-containing proteins.</text>
</comment>
<comment type="PTM">
    <text evidence="3">Ubiquitinated in the presence of STUB1-UBE2D1 complex (in vitro).</text>
</comment>
<comment type="PTM">
    <text evidence="3">ISGylated.</text>
</comment>
<comment type="PTM">
    <text evidence="3">S-nitrosylated; negatively regulates the ATPase activity.</text>
</comment>
<comment type="PTM">
    <text evidence="3">Phosphorylation at Tyr-301 by SRC is induced by lipopolysaccharide. Phosphorylation at Ser-226 and Ser-255 inhibits AHR interaction.</text>
</comment>
<comment type="PTM">
    <text evidence="3">Methylated by SMYD2; facilitates dimerization and chaperone complex formation; promotes cancer cell proliferation.</text>
</comment>
<comment type="PTM">
    <text evidence="3">Cleaved following oxidative stress resulting in HSP90AB1 protein radicals formation; disrupts the chaperoning function and the degradation of its client proteins.</text>
</comment>
<comment type="similarity">
    <text evidence="8">Belongs to the heat shock protein 90 family.</text>
</comment>
<feature type="chain" id="PRO_0000247933" description="Heat shock protein HSP 90-beta">
    <location>
        <begin position="1"/>
        <end position="724"/>
    </location>
</feature>
<feature type="region of interest" description="Interaction with TP53" evidence="3">
    <location>
        <begin position="1"/>
        <end position="527"/>
    </location>
</feature>
<feature type="region of interest" description="Interaction with BIRC2" evidence="3">
    <location>
        <begin position="1"/>
        <end position="214"/>
    </location>
</feature>
<feature type="region of interest" description="Interaction with NR3C1" evidence="4">
    <location>
        <begin position="9"/>
        <end position="231"/>
    </location>
</feature>
<feature type="region of interest" description="Interaction with AHSA1" evidence="3">
    <location>
        <begin position="215"/>
        <end position="552"/>
    </location>
</feature>
<feature type="region of interest" description="Disordered" evidence="7">
    <location>
        <begin position="222"/>
        <end position="270"/>
    </location>
</feature>
<feature type="region of interest" description="Interaction with NR3C1" evidence="4">
    <location>
        <begin position="264"/>
        <end position="608"/>
    </location>
</feature>
<feature type="region of interest" description="Interaction with NR1D1" evidence="4">
    <location>
        <begin position="620"/>
        <end position="723"/>
    </location>
</feature>
<feature type="region of interest" description="Disordered" evidence="7">
    <location>
        <begin position="694"/>
        <end position="724"/>
    </location>
</feature>
<feature type="short sequence motif" description="TPR repeat-binding">
    <location>
        <begin position="720"/>
        <end position="724"/>
    </location>
</feature>
<feature type="compositionally biased region" description="Acidic residues" evidence="7">
    <location>
        <begin position="225"/>
        <end position="244"/>
    </location>
</feature>
<feature type="binding site" evidence="1">
    <location>
        <position position="46"/>
    </location>
    <ligand>
        <name>ATP</name>
        <dbReference type="ChEBI" id="CHEBI:30616"/>
    </ligand>
</feature>
<feature type="binding site" evidence="1">
    <location>
        <position position="88"/>
    </location>
    <ligand>
        <name>ATP</name>
        <dbReference type="ChEBI" id="CHEBI:30616"/>
    </ligand>
</feature>
<feature type="binding site" evidence="1">
    <location>
        <position position="107"/>
    </location>
    <ligand>
        <name>ATP</name>
        <dbReference type="ChEBI" id="CHEBI:30616"/>
    </ligand>
</feature>
<feature type="binding site" evidence="1">
    <location>
        <position position="133"/>
    </location>
    <ligand>
        <name>ATP</name>
        <dbReference type="ChEBI" id="CHEBI:30616"/>
    </ligand>
</feature>
<feature type="binding site" evidence="1">
    <location>
        <position position="392"/>
    </location>
    <ligand>
        <name>ATP</name>
        <dbReference type="ChEBI" id="CHEBI:30616"/>
    </ligand>
</feature>
<feature type="site" description="Cleaved under oxidative stress" evidence="3">
    <location>
        <begin position="126"/>
        <end position="127"/>
    </location>
</feature>
<feature type="modified residue" description="N6-succinyllysine" evidence="4">
    <location>
        <position position="219"/>
    </location>
</feature>
<feature type="modified residue" description="Phosphoserine" evidence="3">
    <location>
        <position position="226"/>
    </location>
</feature>
<feature type="modified residue" description="Phosphoserine" evidence="3">
    <location>
        <position position="255"/>
    </location>
</feature>
<feature type="modified residue" description="Phosphoserine" evidence="4">
    <location>
        <position position="261"/>
    </location>
</feature>
<feature type="modified residue" description="Phosphothreonine" evidence="3">
    <location>
        <position position="297"/>
    </location>
</feature>
<feature type="modified residue" description="Phosphotyrosine" evidence="3">
    <location>
        <position position="301"/>
    </location>
</feature>
<feature type="modified residue" description="Phosphotyrosine" evidence="4">
    <location>
        <position position="305"/>
    </location>
</feature>
<feature type="modified residue" description="Phosphoserine" evidence="3">
    <location>
        <position position="307"/>
    </location>
</feature>
<feature type="modified residue" description="N6-malonyllysine" evidence="1">
    <location>
        <position position="399"/>
    </location>
</feature>
<feature type="modified residue" description="N6-acetyllysine" evidence="3">
    <location>
        <position position="435"/>
    </location>
</feature>
<feature type="modified residue" description="Phosphoserine" evidence="3">
    <location>
        <position position="445"/>
    </location>
</feature>
<feature type="modified residue" description="Phosphothreonine" evidence="3">
    <location>
        <position position="479"/>
    </location>
</feature>
<feature type="modified residue" description="N6-acetyllysine" evidence="3">
    <location>
        <position position="481"/>
    </location>
</feature>
<feature type="modified residue" description="Phosphotyrosine" evidence="4">
    <location>
        <position position="484"/>
    </location>
</feature>
<feature type="modified residue" description="N6-methylated lysine; alternate" evidence="3">
    <location>
        <position position="531"/>
    </location>
</feature>
<feature type="modified residue" description="N6-succinyllysine; alternate" evidence="4">
    <location>
        <position position="531"/>
    </location>
</feature>
<feature type="modified residue" description="N6-methylated lysine" evidence="3">
    <location>
        <position position="574"/>
    </location>
</feature>
<feature type="modified residue" description="N6-succinyllysine" evidence="4">
    <location>
        <position position="577"/>
    </location>
</feature>
<feature type="modified residue" description="S-nitrosocysteine" evidence="3">
    <location>
        <position position="590"/>
    </location>
</feature>
<feature type="modified residue" description="N6-acetyllysine" evidence="4">
    <location>
        <position position="624"/>
    </location>
</feature>
<feature type="modified residue" description="Phosphoserine" evidence="3">
    <location>
        <position position="669"/>
    </location>
</feature>
<feature type="modified residue" description="Phosphoserine; by PLK2 and PLK3" evidence="3">
    <location>
        <position position="718"/>
    </location>
</feature>
<feature type="glycosylation site" description="O-linked (GlcNAc) serine" evidence="1">
    <location>
        <position position="434"/>
    </location>
</feature>
<feature type="glycosylation site" description="O-linked (GlcNAc) serine" evidence="1">
    <location>
        <position position="452"/>
    </location>
</feature>
<gene>
    <name type="primary">HSP90AB1</name>
    <name evidence="3" type="synonym">HSPC3</name>
    <name type="synonym">HSPCB</name>
</gene>